<sequence>TGDMSGEGKGMWFGPRL</sequence>
<accession>P84671</accession>
<name>PPK5_DERVE</name>
<reference key="1">
    <citation type="journal article" date="2009" name="BMC Evol. Biol.">
        <title>A proteomic approach for studying insect phylogeny: CAPA peptides of ancient insect taxa (Dictyoptera, Blattoptera) as a test case.</title>
        <authorList>
            <person name="Roth S."/>
            <person name="Fromm B."/>
            <person name="Gaede G."/>
            <person name="Predel R."/>
        </authorList>
    </citation>
    <scope>PROTEIN SEQUENCE</scope>
    <scope>AMIDATION AT LEU-17</scope>
    <source>
        <tissue>Abdominal perisympathetic organs</tissue>
    </source>
</reference>
<reference evidence="5" key="2">
    <citation type="submission" date="2005-09" db="UniProtKB">
        <authorList>
            <person name="Predel R."/>
        </authorList>
    </citation>
    <scope>PROTEIN SEQUENCE</scope>
    <scope>TISSUE SPECIFICITY</scope>
    <scope>MASS SPECTROMETRY</scope>
    <scope>AMIDATION AT LEU-17</scope>
    <source>
        <tissue>Abdominal perisympathetic organs</tissue>
    </source>
</reference>
<proteinExistence type="evidence at protein level"/>
<dbReference type="GO" id="GO:0005576">
    <property type="term" value="C:extracellular region"/>
    <property type="evidence" value="ECO:0007669"/>
    <property type="project" value="UniProtKB-SubCell"/>
</dbReference>
<dbReference type="GO" id="GO:0005184">
    <property type="term" value="F:neuropeptide hormone activity"/>
    <property type="evidence" value="ECO:0007669"/>
    <property type="project" value="InterPro"/>
</dbReference>
<dbReference type="GO" id="GO:0007218">
    <property type="term" value="P:neuropeptide signaling pathway"/>
    <property type="evidence" value="ECO:0007669"/>
    <property type="project" value="UniProtKB-KW"/>
</dbReference>
<dbReference type="InterPro" id="IPR001484">
    <property type="entry name" value="Pyrokinin_CS"/>
</dbReference>
<dbReference type="PROSITE" id="PS00539">
    <property type="entry name" value="PYROKININ"/>
    <property type="match status" value="1"/>
</dbReference>
<feature type="peptide" id="PRO_0000044344" description="Pyrokinin-5">
    <location>
        <begin position="1"/>
        <end position="17"/>
    </location>
</feature>
<feature type="modified residue" description="Leucine amide" evidence="3 4">
    <location>
        <position position="17"/>
    </location>
</feature>
<organism>
    <name type="scientific">Derocalymma versicolor</name>
    <name type="common">Cockroach</name>
    <dbReference type="NCBI Taxonomy" id="344692"/>
    <lineage>
        <taxon>Eukaryota</taxon>
        <taxon>Metazoa</taxon>
        <taxon>Ecdysozoa</taxon>
        <taxon>Arthropoda</taxon>
        <taxon>Hexapoda</taxon>
        <taxon>Insecta</taxon>
        <taxon>Pterygota</taxon>
        <taxon>Neoptera</taxon>
        <taxon>Polyneoptera</taxon>
        <taxon>Dictyoptera</taxon>
        <taxon>Blattodea</taxon>
        <taxon>Blaberoidea</taxon>
        <taxon>Blaberidae</taxon>
        <taxon>Perisphaerinae</taxon>
        <taxon>Derocalymma</taxon>
    </lineage>
</organism>
<protein>
    <recommendedName>
        <fullName>Pyrokinin-5</fullName>
        <shortName>Derve-PK-5</shortName>
    </recommendedName>
    <alternativeName>
        <fullName>DerVe-Capa-PK</fullName>
    </alternativeName>
    <alternativeName>
        <fullName>FXPRL-amide</fullName>
    </alternativeName>
</protein>
<comment type="function">
    <text evidence="1">Myoactive.</text>
</comment>
<comment type="subcellular location">
    <subcellularLocation>
        <location evidence="5">Secreted</location>
    </subcellularLocation>
</comment>
<comment type="tissue specificity">
    <text evidence="4">Expressed in abdominal perisympathetic organs and abdominal ganglia.</text>
</comment>
<comment type="mass spectrometry">
    <text>With amidation.</text>
</comment>
<comment type="similarity">
    <text evidence="2">Belongs to the pyrokinin family.</text>
</comment>
<keyword id="KW-0027">Amidation</keyword>
<keyword id="KW-0903">Direct protein sequencing</keyword>
<keyword id="KW-0527">Neuropeptide</keyword>
<keyword id="KW-0964">Secreted</keyword>
<evidence type="ECO:0000250" key="1">
    <source>
        <dbReference type="UniProtKB" id="P84594"/>
    </source>
</evidence>
<evidence type="ECO:0000255" key="2"/>
<evidence type="ECO:0000269" key="3">
    <source>
    </source>
</evidence>
<evidence type="ECO:0000269" key="4">
    <source ref="2"/>
</evidence>
<evidence type="ECO:0000305" key="5"/>